<name>REP12_SALTI</name>
<proteinExistence type="inferred from homology"/>
<organism>
    <name type="scientific">Salmonella typhi</name>
    <dbReference type="NCBI Taxonomy" id="90370"/>
    <lineage>
        <taxon>Bacteria</taxon>
        <taxon>Pseudomonadati</taxon>
        <taxon>Pseudomonadota</taxon>
        <taxon>Gammaproteobacteria</taxon>
        <taxon>Enterobacterales</taxon>
        <taxon>Enterobacteriaceae</taxon>
        <taxon>Salmonella</taxon>
    </lineage>
</organism>
<feature type="chain" id="PRO_0000068306" description="RepFIB replication protein A">
    <location>
        <begin position="1"/>
        <end position="325"/>
    </location>
</feature>
<feature type="region of interest" description="Disordered" evidence="2">
    <location>
        <begin position="279"/>
        <end position="298"/>
    </location>
</feature>
<comment type="function">
    <text evidence="1">This protein is essential for plasmid replication; it is involved in copy control functions. In vitro, binds to the DNA repeat units, BCDD'D'', EFG and HIJ (By similarity).</text>
</comment>
<comment type="similarity">
    <text evidence="3">Belongs to the initiator RepB protein family.</text>
</comment>
<comment type="caution">
    <text evidence="3">It is uncertain whether Met-1 or Met-25 is the initiator.</text>
</comment>
<reference key="1">
    <citation type="journal article" date="1993" name="Plasmid">
        <title>RepFIB: a basic replicon of large plasmids.</title>
        <authorList>
            <person name="Gibbs M.D."/>
            <person name="Spiers A.J."/>
            <person name="Bergquist P.L."/>
        </authorList>
    </citation>
    <scope>NUCLEOTIDE SEQUENCE [GENOMIC DNA]</scope>
</reference>
<evidence type="ECO:0000250" key="1"/>
<evidence type="ECO:0000256" key="2">
    <source>
        <dbReference type="SAM" id="MobiDB-lite"/>
    </source>
</evidence>
<evidence type="ECO:0000305" key="3"/>
<gene>
    <name type="primary">repA</name>
    <name type="synonym">repI</name>
</gene>
<accession>P0A253</accession>
<accession>Q57481</accession>
<accession>Q99371</accession>
<protein>
    <recommendedName>
        <fullName>RepFIB replication protein A</fullName>
    </recommendedName>
</protein>
<keyword id="KW-0235">DNA replication</keyword>
<keyword id="KW-0238">DNA-binding</keyword>
<keyword id="KW-0614">Plasmid</keyword>
<keyword id="KW-0615">Plasmid copy control</keyword>
<sequence length="325" mass="37315">MDKSSGELVTLTPNNNNTVQPVALMRLGVFVPTLKSLKNSKKNTLSRTDATEELTRLSLARAEGFDKVEITGPRLDMDNDFKTWVGIIHSFARHNVIGDKVELPFVEFAKLCGIPSSQSSRRLRERISPSLKRIAGTVISFSRTDEKHTREYITHLVQSAYYDTERDIVQLQADPRLFELYQFDRKVLLQLKAINALKRRESAQALYTFIESLPRDPAPISLARLRARLNLKSPVFSQNQTVRRAMEQLREIGYLDYTEIQRGRTKFFCIHYRRPRLKAPNDESKENPLQPSPAEKVSPEMAEKLALLEKLGITLDDLEKLFKSR</sequence>
<dbReference type="EMBL" id="L01253">
    <property type="protein sequence ID" value="AAA71883.1"/>
    <property type="molecule type" value="Unassigned_DNA"/>
</dbReference>
<dbReference type="GO" id="GO:0003677">
    <property type="term" value="F:DNA binding"/>
    <property type="evidence" value="ECO:0007669"/>
    <property type="project" value="UniProtKB-KW"/>
</dbReference>
<dbReference type="GO" id="GO:0003887">
    <property type="term" value="F:DNA-directed DNA polymerase activity"/>
    <property type="evidence" value="ECO:0007669"/>
    <property type="project" value="InterPro"/>
</dbReference>
<dbReference type="GO" id="GO:0006270">
    <property type="term" value="P:DNA replication initiation"/>
    <property type="evidence" value="ECO:0007669"/>
    <property type="project" value="InterPro"/>
</dbReference>
<dbReference type="GO" id="GO:0006276">
    <property type="term" value="P:plasmid maintenance"/>
    <property type="evidence" value="ECO:0007669"/>
    <property type="project" value="UniProtKB-KW"/>
</dbReference>
<dbReference type="Gene3D" id="1.10.10.10">
    <property type="entry name" value="Winged helix-like DNA-binding domain superfamily/Winged helix DNA-binding domain"/>
    <property type="match status" value="1"/>
</dbReference>
<dbReference type="InterPro" id="IPR000525">
    <property type="entry name" value="Initiator_Rep_WH1"/>
</dbReference>
<dbReference type="InterPro" id="IPR036388">
    <property type="entry name" value="WH-like_DNA-bd_sf"/>
</dbReference>
<dbReference type="Pfam" id="PF01051">
    <property type="entry name" value="Rep3_N"/>
    <property type="match status" value="1"/>
</dbReference>
<geneLocation type="plasmid">
    <name>IncFIV R124</name>
</geneLocation>